<sequence length="342" mass="37087">MTSLTLALDAMGGDHGPHVTVPAALRALQLHSFLQIILVGDKTEIDVYLRQADPQLLSRIEVIHTDEVVSMSDRPVHALRTRKNSSMRLAIELVRDARASACVSAGNTGALMAMAKVLLKTLPGIDRPALVSCLPAVTQKPVYLLDLGANVSCDSETLFQFAVMGSVLCEAVDKKSRPKVALLNVGVEEIKGNDQVQQAAQLLQHTEQINYTGFIEGDEIYSGNVDVIVCDGFVGNITLKTSEGIAKLLVHQLKRGLTQGLFVRFLAKLIAPRIQAVLSQMNPDHYNGASLLGLRGIVVKSHGNADETAYLQAISLAVTEAQRRLPEMIKDRLESILLDINN</sequence>
<comment type="function">
    <text evidence="1">Catalyzes the reversible formation of acyl-phosphate (acyl-PO(4)) from acyl-[acyl-carrier-protein] (acyl-ACP). This enzyme utilizes acyl-ACP as fatty acyl donor, but not acyl-CoA.</text>
</comment>
<comment type="catalytic activity">
    <reaction evidence="1">
        <text>a fatty acyl-[ACP] + phosphate = an acyl phosphate + holo-[ACP]</text>
        <dbReference type="Rhea" id="RHEA:42292"/>
        <dbReference type="Rhea" id="RHEA-COMP:9685"/>
        <dbReference type="Rhea" id="RHEA-COMP:14125"/>
        <dbReference type="ChEBI" id="CHEBI:43474"/>
        <dbReference type="ChEBI" id="CHEBI:59918"/>
        <dbReference type="ChEBI" id="CHEBI:64479"/>
        <dbReference type="ChEBI" id="CHEBI:138651"/>
        <dbReference type="EC" id="2.3.1.274"/>
    </reaction>
</comment>
<comment type="pathway">
    <text evidence="1">Lipid metabolism; phospholipid metabolism.</text>
</comment>
<comment type="subunit">
    <text evidence="1">Homodimer. Probably interacts with PlsY.</text>
</comment>
<comment type="subcellular location">
    <subcellularLocation>
        <location evidence="1">Cytoplasm</location>
    </subcellularLocation>
    <text evidence="1">Associated with the membrane possibly through PlsY.</text>
</comment>
<comment type="similarity">
    <text evidence="1">Belongs to the PlsX family.</text>
</comment>
<reference key="1">
    <citation type="submission" date="2006-12" db="EMBL/GenBank/DDBJ databases">
        <title>Complete sequence of Shewanella sp. W3-18-1.</title>
        <authorList>
            <consortium name="US DOE Joint Genome Institute"/>
            <person name="Copeland A."/>
            <person name="Lucas S."/>
            <person name="Lapidus A."/>
            <person name="Barry K."/>
            <person name="Detter J.C."/>
            <person name="Glavina del Rio T."/>
            <person name="Hammon N."/>
            <person name="Israni S."/>
            <person name="Dalin E."/>
            <person name="Tice H."/>
            <person name="Pitluck S."/>
            <person name="Chain P."/>
            <person name="Malfatti S."/>
            <person name="Shin M."/>
            <person name="Vergez L."/>
            <person name="Schmutz J."/>
            <person name="Larimer F."/>
            <person name="Land M."/>
            <person name="Hauser L."/>
            <person name="Kyrpides N."/>
            <person name="Lykidis A."/>
            <person name="Tiedje J."/>
            <person name="Richardson P."/>
        </authorList>
    </citation>
    <scope>NUCLEOTIDE SEQUENCE [LARGE SCALE GENOMIC DNA]</scope>
    <source>
        <strain>W3-18-1</strain>
    </source>
</reference>
<organism>
    <name type="scientific">Shewanella sp. (strain W3-18-1)</name>
    <dbReference type="NCBI Taxonomy" id="351745"/>
    <lineage>
        <taxon>Bacteria</taxon>
        <taxon>Pseudomonadati</taxon>
        <taxon>Pseudomonadota</taxon>
        <taxon>Gammaproteobacteria</taxon>
        <taxon>Alteromonadales</taxon>
        <taxon>Shewanellaceae</taxon>
        <taxon>Shewanella</taxon>
    </lineage>
</organism>
<name>PLSX_SHESW</name>
<proteinExistence type="inferred from homology"/>
<keyword id="KW-0963">Cytoplasm</keyword>
<keyword id="KW-0444">Lipid biosynthesis</keyword>
<keyword id="KW-0443">Lipid metabolism</keyword>
<keyword id="KW-0594">Phospholipid biosynthesis</keyword>
<keyword id="KW-1208">Phospholipid metabolism</keyword>
<keyword id="KW-0808">Transferase</keyword>
<dbReference type="EC" id="2.3.1.274" evidence="1"/>
<dbReference type="EMBL" id="CP000503">
    <property type="protein sequence ID" value="ABM25267.1"/>
    <property type="molecule type" value="Genomic_DNA"/>
</dbReference>
<dbReference type="RefSeq" id="WP_011789728.1">
    <property type="nucleotide sequence ID" value="NC_008750.1"/>
</dbReference>
<dbReference type="SMR" id="A1RKS2"/>
<dbReference type="GeneID" id="67443098"/>
<dbReference type="KEGG" id="shw:Sputw3181_2443"/>
<dbReference type="HOGENOM" id="CLU_039379_1_0_6"/>
<dbReference type="UniPathway" id="UPA00085"/>
<dbReference type="Proteomes" id="UP000002597">
    <property type="component" value="Chromosome"/>
</dbReference>
<dbReference type="GO" id="GO:0005737">
    <property type="term" value="C:cytoplasm"/>
    <property type="evidence" value="ECO:0007669"/>
    <property type="project" value="UniProtKB-SubCell"/>
</dbReference>
<dbReference type="GO" id="GO:0043811">
    <property type="term" value="F:phosphate:acyl-[acyl carrier protein] acyltransferase activity"/>
    <property type="evidence" value="ECO:0007669"/>
    <property type="project" value="UniProtKB-UniRule"/>
</dbReference>
<dbReference type="GO" id="GO:0006633">
    <property type="term" value="P:fatty acid biosynthetic process"/>
    <property type="evidence" value="ECO:0007669"/>
    <property type="project" value="UniProtKB-UniRule"/>
</dbReference>
<dbReference type="GO" id="GO:0008654">
    <property type="term" value="P:phospholipid biosynthetic process"/>
    <property type="evidence" value="ECO:0007669"/>
    <property type="project" value="UniProtKB-KW"/>
</dbReference>
<dbReference type="Gene3D" id="3.40.718.10">
    <property type="entry name" value="Isopropylmalate Dehydrogenase"/>
    <property type="match status" value="1"/>
</dbReference>
<dbReference type="HAMAP" id="MF_00019">
    <property type="entry name" value="PlsX"/>
    <property type="match status" value="1"/>
</dbReference>
<dbReference type="InterPro" id="IPR003664">
    <property type="entry name" value="FA_synthesis"/>
</dbReference>
<dbReference type="InterPro" id="IPR012281">
    <property type="entry name" value="Phospholipid_synth_PlsX-like"/>
</dbReference>
<dbReference type="NCBIfam" id="TIGR00182">
    <property type="entry name" value="plsX"/>
    <property type="match status" value="1"/>
</dbReference>
<dbReference type="PANTHER" id="PTHR30100">
    <property type="entry name" value="FATTY ACID/PHOSPHOLIPID SYNTHESIS PROTEIN PLSX"/>
    <property type="match status" value="1"/>
</dbReference>
<dbReference type="PANTHER" id="PTHR30100:SF1">
    <property type="entry name" value="PHOSPHATE ACYLTRANSFERASE"/>
    <property type="match status" value="1"/>
</dbReference>
<dbReference type="Pfam" id="PF02504">
    <property type="entry name" value="FA_synthesis"/>
    <property type="match status" value="1"/>
</dbReference>
<dbReference type="PIRSF" id="PIRSF002465">
    <property type="entry name" value="Phsphlp_syn_PlsX"/>
    <property type="match status" value="1"/>
</dbReference>
<dbReference type="SUPFAM" id="SSF53659">
    <property type="entry name" value="Isocitrate/Isopropylmalate dehydrogenase-like"/>
    <property type="match status" value="1"/>
</dbReference>
<gene>
    <name evidence="1" type="primary">plsX</name>
    <name type="ordered locus">Sputw3181_2443</name>
</gene>
<protein>
    <recommendedName>
        <fullName evidence="1">Phosphate acyltransferase</fullName>
        <ecNumber evidence="1">2.3.1.274</ecNumber>
    </recommendedName>
    <alternativeName>
        <fullName evidence="1">Acyl-ACP phosphotransacylase</fullName>
    </alternativeName>
    <alternativeName>
        <fullName evidence="1">Acyl-[acyl-carrier-protein]--phosphate acyltransferase</fullName>
    </alternativeName>
    <alternativeName>
        <fullName evidence="1">Phosphate-acyl-ACP acyltransferase</fullName>
    </alternativeName>
</protein>
<feature type="chain" id="PRO_1000001832" description="Phosphate acyltransferase">
    <location>
        <begin position="1"/>
        <end position="342"/>
    </location>
</feature>
<accession>A1RKS2</accession>
<evidence type="ECO:0000255" key="1">
    <source>
        <dbReference type="HAMAP-Rule" id="MF_00019"/>
    </source>
</evidence>